<organism>
    <name type="scientific">Mycobacterium marinum (strain ATCC BAA-535 / M)</name>
    <dbReference type="NCBI Taxonomy" id="216594"/>
    <lineage>
        <taxon>Bacteria</taxon>
        <taxon>Bacillati</taxon>
        <taxon>Actinomycetota</taxon>
        <taxon>Actinomycetes</taxon>
        <taxon>Mycobacteriales</taxon>
        <taxon>Mycobacteriaceae</taxon>
        <taxon>Mycobacterium</taxon>
        <taxon>Mycobacterium ulcerans group</taxon>
    </lineage>
</organism>
<evidence type="ECO:0000255" key="1">
    <source>
        <dbReference type="HAMAP-Rule" id="MF_00332"/>
    </source>
</evidence>
<evidence type="ECO:0000256" key="2">
    <source>
        <dbReference type="SAM" id="MobiDB-lite"/>
    </source>
</evidence>
<dbReference type="EMBL" id="CP000854">
    <property type="protein sequence ID" value="ACC39098.1"/>
    <property type="molecule type" value="Genomic_DNA"/>
</dbReference>
<dbReference type="RefSeq" id="WP_012392596.1">
    <property type="nucleotide sequence ID" value="NC_010612.1"/>
</dbReference>
<dbReference type="SMR" id="B2HPS1"/>
<dbReference type="STRING" id="216594.MMAR_0637"/>
<dbReference type="KEGG" id="mmi:MMAR_0637"/>
<dbReference type="eggNOG" id="COG0443">
    <property type="taxonomic scope" value="Bacteria"/>
</dbReference>
<dbReference type="HOGENOM" id="CLU_005965_2_1_11"/>
<dbReference type="OrthoDB" id="9766019at2"/>
<dbReference type="Proteomes" id="UP000001190">
    <property type="component" value="Chromosome"/>
</dbReference>
<dbReference type="GO" id="GO:0005524">
    <property type="term" value="F:ATP binding"/>
    <property type="evidence" value="ECO:0007669"/>
    <property type="project" value="UniProtKB-UniRule"/>
</dbReference>
<dbReference type="GO" id="GO:0140662">
    <property type="term" value="F:ATP-dependent protein folding chaperone"/>
    <property type="evidence" value="ECO:0007669"/>
    <property type="project" value="InterPro"/>
</dbReference>
<dbReference type="GO" id="GO:0051082">
    <property type="term" value="F:unfolded protein binding"/>
    <property type="evidence" value="ECO:0007669"/>
    <property type="project" value="InterPro"/>
</dbReference>
<dbReference type="CDD" id="cd10234">
    <property type="entry name" value="ASKHA_NBD_HSP70_DnaK-like"/>
    <property type="match status" value="1"/>
</dbReference>
<dbReference type="FunFam" id="2.60.34.10:FF:000014">
    <property type="entry name" value="Chaperone protein DnaK HSP70"/>
    <property type="match status" value="1"/>
</dbReference>
<dbReference type="FunFam" id="1.20.1270.10:FF:000001">
    <property type="entry name" value="Molecular chaperone DnaK"/>
    <property type="match status" value="1"/>
</dbReference>
<dbReference type="FunFam" id="3.30.420.40:FF:000071">
    <property type="entry name" value="Molecular chaperone DnaK"/>
    <property type="match status" value="1"/>
</dbReference>
<dbReference type="FunFam" id="3.90.640.10:FF:000003">
    <property type="entry name" value="Molecular chaperone DnaK"/>
    <property type="match status" value="1"/>
</dbReference>
<dbReference type="Gene3D" id="1.20.1270.10">
    <property type="match status" value="1"/>
</dbReference>
<dbReference type="Gene3D" id="3.30.420.40">
    <property type="match status" value="2"/>
</dbReference>
<dbReference type="Gene3D" id="3.90.640.10">
    <property type="entry name" value="Actin, Chain A, domain 4"/>
    <property type="match status" value="1"/>
</dbReference>
<dbReference type="Gene3D" id="2.60.34.10">
    <property type="entry name" value="Substrate Binding Domain Of DNAk, Chain A, domain 1"/>
    <property type="match status" value="1"/>
</dbReference>
<dbReference type="HAMAP" id="MF_00332">
    <property type="entry name" value="DnaK"/>
    <property type="match status" value="1"/>
</dbReference>
<dbReference type="InterPro" id="IPR043129">
    <property type="entry name" value="ATPase_NBD"/>
</dbReference>
<dbReference type="InterPro" id="IPR012725">
    <property type="entry name" value="Chaperone_DnaK"/>
</dbReference>
<dbReference type="InterPro" id="IPR018181">
    <property type="entry name" value="Heat_shock_70_CS"/>
</dbReference>
<dbReference type="InterPro" id="IPR029048">
    <property type="entry name" value="HSP70_C_sf"/>
</dbReference>
<dbReference type="InterPro" id="IPR029047">
    <property type="entry name" value="HSP70_peptide-bd_sf"/>
</dbReference>
<dbReference type="InterPro" id="IPR013126">
    <property type="entry name" value="Hsp_70_fam"/>
</dbReference>
<dbReference type="NCBIfam" id="NF001413">
    <property type="entry name" value="PRK00290.1"/>
    <property type="match status" value="1"/>
</dbReference>
<dbReference type="NCBIfam" id="TIGR02350">
    <property type="entry name" value="prok_dnaK"/>
    <property type="match status" value="1"/>
</dbReference>
<dbReference type="PANTHER" id="PTHR19375">
    <property type="entry name" value="HEAT SHOCK PROTEIN 70KDA"/>
    <property type="match status" value="1"/>
</dbReference>
<dbReference type="Pfam" id="PF00012">
    <property type="entry name" value="HSP70"/>
    <property type="match status" value="2"/>
</dbReference>
<dbReference type="PRINTS" id="PR00301">
    <property type="entry name" value="HEATSHOCK70"/>
</dbReference>
<dbReference type="SUPFAM" id="SSF53067">
    <property type="entry name" value="Actin-like ATPase domain"/>
    <property type="match status" value="2"/>
</dbReference>
<dbReference type="SUPFAM" id="SSF100934">
    <property type="entry name" value="Heat shock protein 70kD (HSP70), C-terminal subdomain"/>
    <property type="match status" value="1"/>
</dbReference>
<dbReference type="SUPFAM" id="SSF100920">
    <property type="entry name" value="Heat shock protein 70kD (HSP70), peptide-binding domain"/>
    <property type="match status" value="1"/>
</dbReference>
<dbReference type="PROSITE" id="PS00297">
    <property type="entry name" value="HSP70_1"/>
    <property type="match status" value="1"/>
</dbReference>
<dbReference type="PROSITE" id="PS00329">
    <property type="entry name" value="HSP70_2"/>
    <property type="match status" value="1"/>
</dbReference>
<dbReference type="PROSITE" id="PS01036">
    <property type="entry name" value="HSP70_3"/>
    <property type="match status" value="1"/>
</dbReference>
<reference key="1">
    <citation type="journal article" date="2008" name="Genome Res.">
        <title>Insights from the complete genome sequence of Mycobacterium marinum on the evolution of Mycobacterium tuberculosis.</title>
        <authorList>
            <person name="Stinear T.P."/>
            <person name="Seemann T."/>
            <person name="Harrison P.F."/>
            <person name="Jenkin G.A."/>
            <person name="Davies J.K."/>
            <person name="Johnson P.D."/>
            <person name="Abdellah Z."/>
            <person name="Arrowsmith C."/>
            <person name="Chillingworth T."/>
            <person name="Churcher C."/>
            <person name="Clarke K."/>
            <person name="Cronin A."/>
            <person name="Davis P."/>
            <person name="Goodhead I."/>
            <person name="Holroyd N."/>
            <person name="Jagels K."/>
            <person name="Lord A."/>
            <person name="Moule S."/>
            <person name="Mungall K."/>
            <person name="Norbertczak H."/>
            <person name="Quail M.A."/>
            <person name="Rabbinowitsch E."/>
            <person name="Walker D."/>
            <person name="White B."/>
            <person name="Whitehead S."/>
            <person name="Small P.L."/>
            <person name="Brosch R."/>
            <person name="Ramakrishnan L."/>
            <person name="Fischbach M.A."/>
            <person name="Parkhill J."/>
            <person name="Cole S.T."/>
        </authorList>
    </citation>
    <scope>NUCLEOTIDE SEQUENCE [LARGE SCALE GENOMIC DNA]</scope>
    <source>
        <strain>ATCC BAA-535 / M</strain>
    </source>
</reference>
<name>DNAK_MYCMM</name>
<protein>
    <recommendedName>
        <fullName evidence="1">Chaperone protein DnaK</fullName>
    </recommendedName>
    <alternativeName>
        <fullName evidence="1">HSP70</fullName>
    </alternativeName>
    <alternativeName>
        <fullName evidence="1">Heat shock 70 kDa protein</fullName>
    </alternativeName>
    <alternativeName>
        <fullName evidence="1">Heat shock protein 70</fullName>
    </alternativeName>
</protein>
<accession>B2HPS1</accession>
<feature type="chain" id="PRO_1000119734" description="Chaperone protein DnaK">
    <location>
        <begin position="1"/>
        <end position="622"/>
    </location>
</feature>
<feature type="region of interest" description="Disordered" evidence="2">
    <location>
        <begin position="589"/>
        <end position="609"/>
    </location>
</feature>
<feature type="compositionally biased region" description="Gly residues" evidence="2">
    <location>
        <begin position="594"/>
        <end position="603"/>
    </location>
</feature>
<feature type="modified residue" description="Phosphothreonine; by autocatalysis" evidence="1">
    <location>
        <position position="175"/>
    </location>
</feature>
<sequence>MARAVGIDLGTTNSVVAVLEGGDPVVVANSEGSRTTPSVVAFARNGEVLVGQPAKNQAVTNVDRTIRSVKRHMGGDWSIEIDDKKYTAPEISARVLMKLKRDAEAYLGEDIADAVITVPAYFNDAQRQATKDAGQIAGLNVLRIVNEPTAAALAYGLDKGEKEQTILVFDLGGGTFDVSLLEIGEGVVEVRATSGDNHLGGDDWDDRVVEWLVDKFKGTSGIDLTKDKMAMQRLREAAEKAKIELSSSQSTSINLPYITVDADKNPLFLDEQLTRAEFQRITQDLLDRTRKPFQSVIADTGISVSDIDHVVLVGGSTRMPAVTELVKELTGGKEPNKGVNPDEVVAVGAALQAGVLKGEVKDVLLLDVTPLSLGIETKGGVMTKLIERNTTIPTKRSETFTTADDNQPSVQIQVYQGEREIAAHNKLLGSFELTGIPPAPRGVPQIEVTFDIDANGIVHVTAKDKGTGKENTIRIQEGSGLSKDEIDRMIKDAEAHAAEDHKRREEADVRNQAETLVYQTEKFVKEQREAEGGSKVPEDTLNKVDAAVAEAKSALAGTDIAAIKSAMEKLGEESQALGQAIYEATQADAAAAGAPGGQPGGAEPGADDVVDAEVVDDDQESK</sequence>
<comment type="function">
    <text evidence="1">Acts as a chaperone.</text>
</comment>
<comment type="induction">
    <text evidence="1">By stress conditions e.g. heat shock.</text>
</comment>
<comment type="similarity">
    <text evidence="1">Belongs to the heat shock protein 70 family.</text>
</comment>
<gene>
    <name evidence="1" type="primary">dnaK</name>
    <name type="ordered locus">MMAR_0637</name>
</gene>
<proteinExistence type="inferred from homology"/>
<keyword id="KW-0067">ATP-binding</keyword>
<keyword id="KW-0143">Chaperone</keyword>
<keyword id="KW-0547">Nucleotide-binding</keyword>
<keyword id="KW-0597">Phosphoprotein</keyword>
<keyword id="KW-1185">Reference proteome</keyword>
<keyword id="KW-0346">Stress response</keyword>